<sequence length="301" mass="34358">MAANYWVSTQRRHWLFTRERLADIREGFKERDKVAHSQFPLPDQRLLNIYFSQQLIKLGKRTTTRQQALATAQVYIKRFYTKNDIRHTNPYLVITTAFYLACKMEECPQHIRFVVAEARSFWPEFIAPDVSKLGECEFALISEMNSQLIVHHPYRTLSELTPELQLTSDEVALAWSVINDHYLTDLPLLYPPHVIAVMAIIVAVVFKPSQTSFHGSAGPALAGAMRDGGVNLLAALGDKNGNGPPRIQKLVGWLAESEVDIKAVIECTQELVSLYEIWEQYSEKHCKELLGRMVKSKNLDK</sequence>
<accession>Q0CV29</accession>
<proteinExistence type="inferred from homology"/>
<name>SSN8_ASPTN</name>
<dbReference type="EMBL" id="CH476596">
    <property type="protein sequence ID" value="EAU37417.1"/>
    <property type="molecule type" value="Genomic_DNA"/>
</dbReference>
<dbReference type="RefSeq" id="XP_001211633.1">
    <property type="nucleotide sequence ID" value="XM_001211633.1"/>
</dbReference>
<dbReference type="SMR" id="Q0CV29"/>
<dbReference type="STRING" id="341663.Q0CV29"/>
<dbReference type="EnsemblFungi" id="EAU37417">
    <property type="protein sequence ID" value="EAU37417"/>
    <property type="gene ID" value="ATEG_02455"/>
</dbReference>
<dbReference type="GeneID" id="4316481"/>
<dbReference type="VEuPathDB" id="FungiDB:ATEG_02455"/>
<dbReference type="eggNOG" id="KOG0794">
    <property type="taxonomic scope" value="Eukaryota"/>
</dbReference>
<dbReference type="HOGENOM" id="CLU_034754_2_0_1"/>
<dbReference type="OMA" id="CLLHPPH"/>
<dbReference type="OrthoDB" id="10266018at2759"/>
<dbReference type="Proteomes" id="UP000007963">
    <property type="component" value="Unassembled WGS sequence"/>
</dbReference>
<dbReference type="GO" id="GO:0005634">
    <property type="term" value="C:nucleus"/>
    <property type="evidence" value="ECO:0007669"/>
    <property type="project" value="UniProtKB-SubCell"/>
</dbReference>
<dbReference type="GO" id="GO:0016538">
    <property type="term" value="F:cyclin-dependent protein serine/threonine kinase regulator activity"/>
    <property type="evidence" value="ECO:0007669"/>
    <property type="project" value="InterPro"/>
</dbReference>
<dbReference type="GO" id="GO:0006357">
    <property type="term" value="P:regulation of transcription by RNA polymerase II"/>
    <property type="evidence" value="ECO:0007669"/>
    <property type="project" value="InterPro"/>
</dbReference>
<dbReference type="CDD" id="cd20513">
    <property type="entry name" value="CYCLIN_CCNC_rpt1"/>
    <property type="match status" value="1"/>
</dbReference>
<dbReference type="FunFam" id="1.10.472.10:FF:000092">
    <property type="entry name" value="RNA polymerase II holoenzyme cyclin-like subunit"/>
    <property type="match status" value="1"/>
</dbReference>
<dbReference type="Gene3D" id="1.10.472.10">
    <property type="entry name" value="Cyclin-like"/>
    <property type="match status" value="2"/>
</dbReference>
<dbReference type="InterPro" id="IPR013763">
    <property type="entry name" value="Cyclin-like_dom"/>
</dbReference>
<dbReference type="InterPro" id="IPR036915">
    <property type="entry name" value="Cyclin-like_sf"/>
</dbReference>
<dbReference type="InterPro" id="IPR043198">
    <property type="entry name" value="Cyclin/Ssn8"/>
</dbReference>
<dbReference type="InterPro" id="IPR006671">
    <property type="entry name" value="Cyclin_N"/>
</dbReference>
<dbReference type="PANTHER" id="PTHR10026">
    <property type="entry name" value="CYCLIN"/>
    <property type="match status" value="1"/>
</dbReference>
<dbReference type="Pfam" id="PF00134">
    <property type="entry name" value="Cyclin_N"/>
    <property type="match status" value="1"/>
</dbReference>
<dbReference type="PIRSF" id="PIRSF028758">
    <property type="entry name" value="Cyclin, C/H/G types"/>
    <property type="match status" value="1"/>
</dbReference>
<dbReference type="SMART" id="SM00385">
    <property type="entry name" value="CYCLIN"/>
    <property type="match status" value="1"/>
</dbReference>
<dbReference type="SUPFAM" id="SSF47954">
    <property type="entry name" value="Cyclin-like"/>
    <property type="match status" value="2"/>
</dbReference>
<keyword id="KW-0010">Activator</keyword>
<keyword id="KW-0195">Cyclin</keyword>
<keyword id="KW-0539">Nucleus</keyword>
<keyword id="KW-1185">Reference proteome</keyword>
<keyword id="KW-0678">Repressor</keyword>
<keyword id="KW-0804">Transcription</keyword>
<keyword id="KW-0805">Transcription regulation</keyword>
<gene>
    <name type="primary">ssn8</name>
    <name type="ORF">ATEG_02455</name>
</gene>
<evidence type="ECO:0000250" key="1"/>
<evidence type="ECO:0000305" key="2"/>
<comment type="function">
    <text evidence="1">Component of the srb8-11 complex. The srb8-11 complex is a regulatory module of the Mediator complex which is itself involved in regulation of basal and activated RNA polymerase II-dependent transcription. The srb8-11 complex may be involved in the transcriptional repression of a subset of genes regulated by Mediator. It may inhibit the association of the Mediator complex with RNA polymerase II to form the holoenzyme complex. The srb8-11 complex phosphorylates the C-terminal domain (CTD) of the largest subunit of RNA polymerase II (By similarity).</text>
</comment>
<comment type="subunit">
    <text evidence="1">Component of the srb8-11 complex, a regulatory module of the Mediator complex.</text>
</comment>
<comment type="subcellular location">
    <subcellularLocation>
        <location evidence="2">Nucleus</location>
    </subcellularLocation>
</comment>
<comment type="similarity">
    <text evidence="2">Belongs to the cyclin family. Cyclin C subfamily.</text>
</comment>
<reference key="1">
    <citation type="submission" date="2005-09" db="EMBL/GenBank/DDBJ databases">
        <title>Annotation of the Aspergillus terreus NIH2624 genome.</title>
        <authorList>
            <person name="Birren B.W."/>
            <person name="Lander E.S."/>
            <person name="Galagan J.E."/>
            <person name="Nusbaum C."/>
            <person name="Devon K."/>
            <person name="Henn M."/>
            <person name="Ma L.-J."/>
            <person name="Jaffe D.B."/>
            <person name="Butler J."/>
            <person name="Alvarez P."/>
            <person name="Gnerre S."/>
            <person name="Grabherr M."/>
            <person name="Kleber M."/>
            <person name="Mauceli E.W."/>
            <person name="Brockman W."/>
            <person name="Rounsley S."/>
            <person name="Young S.K."/>
            <person name="LaButti K."/>
            <person name="Pushparaj V."/>
            <person name="DeCaprio D."/>
            <person name="Crawford M."/>
            <person name="Koehrsen M."/>
            <person name="Engels R."/>
            <person name="Montgomery P."/>
            <person name="Pearson M."/>
            <person name="Howarth C."/>
            <person name="Larson L."/>
            <person name="Luoma S."/>
            <person name="White J."/>
            <person name="Alvarado L."/>
            <person name="Kodira C.D."/>
            <person name="Zeng Q."/>
            <person name="Oleary S."/>
            <person name="Yandava C."/>
            <person name="Denning D.W."/>
            <person name="Nierman W.C."/>
            <person name="Milne T."/>
            <person name="Madden K."/>
        </authorList>
    </citation>
    <scope>NUCLEOTIDE SEQUENCE [LARGE SCALE GENOMIC DNA]</scope>
    <source>
        <strain>NIH 2624 / FGSC A1156</strain>
    </source>
</reference>
<protein>
    <recommendedName>
        <fullName>RNA polymerase II holoenzyme cyclin-like subunit</fullName>
    </recommendedName>
</protein>
<feature type="chain" id="PRO_0000314269" description="RNA polymerase II holoenzyme cyclin-like subunit">
    <location>
        <begin position="1"/>
        <end position="301"/>
    </location>
</feature>
<feature type="domain" description="Cyclin N-terminal">
    <location>
        <begin position="53"/>
        <end position="142"/>
    </location>
</feature>
<organism>
    <name type="scientific">Aspergillus terreus (strain NIH 2624 / FGSC A1156)</name>
    <dbReference type="NCBI Taxonomy" id="341663"/>
    <lineage>
        <taxon>Eukaryota</taxon>
        <taxon>Fungi</taxon>
        <taxon>Dikarya</taxon>
        <taxon>Ascomycota</taxon>
        <taxon>Pezizomycotina</taxon>
        <taxon>Eurotiomycetes</taxon>
        <taxon>Eurotiomycetidae</taxon>
        <taxon>Eurotiales</taxon>
        <taxon>Aspergillaceae</taxon>
        <taxon>Aspergillus</taxon>
        <taxon>Aspergillus subgen. Circumdati</taxon>
    </lineage>
</organism>